<organism>
    <name type="scientific">Xanthomonas campestris pv. campestris (strain ATCC 33913 / DSM 3586 / NCPPB 528 / LMG 568 / P 25)</name>
    <dbReference type="NCBI Taxonomy" id="190485"/>
    <lineage>
        <taxon>Bacteria</taxon>
        <taxon>Pseudomonadati</taxon>
        <taxon>Pseudomonadota</taxon>
        <taxon>Gammaproteobacteria</taxon>
        <taxon>Lysobacterales</taxon>
        <taxon>Lysobacteraceae</taxon>
        <taxon>Xanthomonas</taxon>
    </lineage>
</organism>
<gene>
    <name evidence="1" type="primary">guaA</name>
    <name type="ordered locus">XCC2183</name>
</gene>
<dbReference type="EC" id="6.3.5.2" evidence="1"/>
<dbReference type="EMBL" id="AE008922">
    <property type="protein sequence ID" value="AAM41463.1"/>
    <property type="molecule type" value="Genomic_DNA"/>
</dbReference>
<dbReference type="RefSeq" id="NP_637539.1">
    <property type="nucleotide sequence ID" value="NC_003902.1"/>
</dbReference>
<dbReference type="RefSeq" id="WP_011037329.1">
    <property type="nucleotide sequence ID" value="NC_003902.1"/>
</dbReference>
<dbReference type="SMR" id="Q8P8Q6"/>
<dbReference type="STRING" id="190485.XCC2183"/>
<dbReference type="MEROPS" id="C26.957"/>
<dbReference type="EnsemblBacteria" id="AAM41463">
    <property type="protein sequence ID" value="AAM41463"/>
    <property type="gene ID" value="XCC2183"/>
</dbReference>
<dbReference type="KEGG" id="xcc:XCC2183"/>
<dbReference type="PATRIC" id="fig|190485.4.peg.2331"/>
<dbReference type="eggNOG" id="COG0518">
    <property type="taxonomic scope" value="Bacteria"/>
</dbReference>
<dbReference type="eggNOG" id="COG0519">
    <property type="taxonomic scope" value="Bacteria"/>
</dbReference>
<dbReference type="HOGENOM" id="CLU_014340_0_5_6"/>
<dbReference type="OrthoDB" id="9802219at2"/>
<dbReference type="UniPathway" id="UPA00189">
    <property type="reaction ID" value="UER00296"/>
</dbReference>
<dbReference type="Proteomes" id="UP000001010">
    <property type="component" value="Chromosome"/>
</dbReference>
<dbReference type="GO" id="GO:0005829">
    <property type="term" value="C:cytosol"/>
    <property type="evidence" value="ECO:0000318"/>
    <property type="project" value="GO_Central"/>
</dbReference>
<dbReference type="GO" id="GO:0005524">
    <property type="term" value="F:ATP binding"/>
    <property type="evidence" value="ECO:0007669"/>
    <property type="project" value="UniProtKB-UniRule"/>
</dbReference>
<dbReference type="GO" id="GO:0003921">
    <property type="term" value="F:GMP synthase activity"/>
    <property type="evidence" value="ECO:0000318"/>
    <property type="project" value="GO_Central"/>
</dbReference>
<dbReference type="GO" id="GO:0006177">
    <property type="term" value="P:GMP biosynthetic process"/>
    <property type="evidence" value="ECO:0000318"/>
    <property type="project" value="GO_Central"/>
</dbReference>
<dbReference type="CDD" id="cd01742">
    <property type="entry name" value="GATase1_GMP_Synthase"/>
    <property type="match status" value="1"/>
</dbReference>
<dbReference type="CDD" id="cd01997">
    <property type="entry name" value="GMP_synthase_C"/>
    <property type="match status" value="1"/>
</dbReference>
<dbReference type="FunFam" id="3.30.300.10:FF:000002">
    <property type="entry name" value="GMP synthase [glutamine-hydrolyzing]"/>
    <property type="match status" value="1"/>
</dbReference>
<dbReference type="FunFam" id="3.40.50.620:FF:000001">
    <property type="entry name" value="GMP synthase [glutamine-hydrolyzing]"/>
    <property type="match status" value="1"/>
</dbReference>
<dbReference type="FunFam" id="3.40.50.880:FF:000001">
    <property type="entry name" value="GMP synthase [glutamine-hydrolyzing]"/>
    <property type="match status" value="1"/>
</dbReference>
<dbReference type="Gene3D" id="3.30.300.10">
    <property type="match status" value="1"/>
</dbReference>
<dbReference type="Gene3D" id="3.40.50.880">
    <property type="match status" value="1"/>
</dbReference>
<dbReference type="Gene3D" id="3.40.50.620">
    <property type="entry name" value="HUPs"/>
    <property type="match status" value="1"/>
</dbReference>
<dbReference type="HAMAP" id="MF_00344">
    <property type="entry name" value="GMP_synthase"/>
    <property type="match status" value="1"/>
</dbReference>
<dbReference type="InterPro" id="IPR029062">
    <property type="entry name" value="Class_I_gatase-like"/>
</dbReference>
<dbReference type="InterPro" id="IPR017926">
    <property type="entry name" value="GATASE"/>
</dbReference>
<dbReference type="InterPro" id="IPR001674">
    <property type="entry name" value="GMP_synth_C"/>
</dbReference>
<dbReference type="InterPro" id="IPR004739">
    <property type="entry name" value="GMP_synth_GATase"/>
</dbReference>
<dbReference type="InterPro" id="IPR022955">
    <property type="entry name" value="GMP_synthase"/>
</dbReference>
<dbReference type="InterPro" id="IPR025777">
    <property type="entry name" value="GMPS_ATP_PPase_dom"/>
</dbReference>
<dbReference type="InterPro" id="IPR022310">
    <property type="entry name" value="NAD/GMP_synthase"/>
</dbReference>
<dbReference type="InterPro" id="IPR014729">
    <property type="entry name" value="Rossmann-like_a/b/a_fold"/>
</dbReference>
<dbReference type="NCBIfam" id="TIGR00884">
    <property type="entry name" value="guaA_Cterm"/>
    <property type="match status" value="1"/>
</dbReference>
<dbReference type="NCBIfam" id="TIGR00888">
    <property type="entry name" value="guaA_Nterm"/>
    <property type="match status" value="1"/>
</dbReference>
<dbReference type="NCBIfam" id="NF000848">
    <property type="entry name" value="PRK00074.1"/>
    <property type="match status" value="1"/>
</dbReference>
<dbReference type="PANTHER" id="PTHR11922:SF2">
    <property type="entry name" value="GMP SYNTHASE [GLUTAMINE-HYDROLYZING]"/>
    <property type="match status" value="1"/>
</dbReference>
<dbReference type="PANTHER" id="PTHR11922">
    <property type="entry name" value="GMP SYNTHASE-RELATED"/>
    <property type="match status" value="1"/>
</dbReference>
<dbReference type="Pfam" id="PF00117">
    <property type="entry name" value="GATase"/>
    <property type="match status" value="1"/>
</dbReference>
<dbReference type="Pfam" id="PF00958">
    <property type="entry name" value="GMP_synt_C"/>
    <property type="match status" value="1"/>
</dbReference>
<dbReference type="Pfam" id="PF02540">
    <property type="entry name" value="NAD_synthase"/>
    <property type="match status" value="1"/>
</dbReference>
<dbReference type="PRINTS" id="PR00097">
    <property type="entry name" value="ANTSNTHASEII"/>
</dbReference>
<dbReference type="PRINTS" id="PR00099">
    <property type="entry name" value="CPSGATASE"/>
</dbReference>
<dbReference type="PRINTS" id="PR00096">
    <property type="entry name" value="GATASE"/>
</dbReference>
<dbReference type="SUPFAM" id="SSF52402">
    <property type="entry name" value="Adenine nucleotide alpha hydrolases-like"/>
    <property type="match status" value="1"/>
</dbReference>
<dbReference type="SUPFAM" id="SSF52317">
    <property type="entry name" value="Class I glutamine amidotransferase-like"/>
    <property type="match status" value="1"/>
</dbReference>
<dbReference type="SUPFAM" id="SSF54810">
    <property type="entry name" value="GMP synthetase C-terminal dimerisation domain"/>
    <property type="match status" value="1"/>
</dbReference>
<dbReference type="PROSITE" id="PS51273">
    <property type="entry name" value="GATASE_TYPE_1"/>
    <property type="match status" value="1"/>
</dbReference>
<dbReference type="PROSITE" id="PS51553">
    <property type="entry name" value="GMPS_ATP_PPASE"/>
    <property type="match status" value="1"/>
</dbReference>
<comment type="function">
    <text evidence="1">Catalyzes the synthesis of GMP from XMP.</text>
</comment>
<comment type="catalytic activity">
    <reaction evidence="1">
        <text>XMP + L-glutamine + ATP + H2O = GMP + L-glutamate + AMP + diphosphate + 2 H(+)</text>
        <dbReference type="Rhea" id="RHEA:11680"/>
        <dbReference type="ChEBI" id="CHEBI:15377"/>
        <dbReference type="ChEBI" id="CHEBI:15378"/>
        <dbReference type="ChEBI" id="CHEBI:29985"/>
        <dbReference type="ChEBI" id="CHEBI:30616"/>
        <dbReference type="ChEBI" id="CHEBI:33019"/>
        <dbReference type="ChEBI" id="CHEBI:57464"/>
        <dbReference type="ChEBI" id="CHEBI:58115"/>
        <dbReference type="ChEBI" id="CHEBI:58359"/>
        <dbReference type="ChEBI" id="CHEBI:456215"/>
        <dbReference type="EC" id="6.3.5.2"/>
    </reaction>
</comment>
<comment type="pathway">
    <text evidence="1">Purine metabolism; GMP biosynthesis; GMP from XMP (L-Gln route): step 1/1.</text>
</comment>
<comment type="subunit">
    <text evidence="1">Homodimer.</text>
</comment>
<keyword id="KW-0067">ATP-binding</keyword>
<keyword id="KW-0315">Glutamine amidotransferase</keyword>
<keyword id="KW-0332">GMP biosynthesis</keyword>
<keyword id="KW-0436">Ligase</keyword>
<keyword id="KW-0547">Nucleotide-binding</keyword>
<keyword id="KW-0658">Purine biosynthesis</keyword>
<keyword id="KW-1185">Reference proteome</keyword>
<feature type="chain" id="PRO_0000140211" description="GMP synthase [glutamine-hydrolyzing]">
    <location>
        <begin position="1"/>
        <end position="521"/>
    </location>
</feature>
<feature type="domain" description="Glutamine amidotransferase type-1" evidence="1">
    <location>
        <begin position="8"/>
        <end position="203"/>
    </location>
</feature>
<feature type="domain" description="GMPS ATP-PPase" evidence="1">
    <location>
        <begin position="204"/>
        <end position="396"/>
    </location>
</feature>
<feature type="active site" description="Nucleophile" evidence="1">
    <location>
        <position position="85"/>
    </location>
</feature>
<feature type="active site" evidence="1">
    <location>
        <position position="177"/>
    </location>
</feature>
<feature type="active site" evidence="1">
    <location>
        <position position="179"/>
    </location>
</feature>
<feature type="binding site" evidence="1">
    <location>
        <begin position="231"/>
        <end position="237"/>
    </location>
    <ligand>
        <name>ATP</name>
        <dbReference type="ChEBI" id="CHEBI:30616"/>
    </ligand>
</feature>
<sequence length="521" mass="57086">MSSLHNDKILILDFGAQYTQLIARRIREIGVYCEIWAWDHDPSEIAGFGAKGIILSGGPESTTLPGAPVAPQEVFDSGLPVFGICYGMQTLAAQLGGATEAADQREFGHAEVDVVAADALFSGLTDHAGASRLNVWMSHGDHVSQVPPGFTITAVTDRIPVAAMSNEDKRWYGVQFHPEVTHTLQGQTLLRRFVVDVCGCQTLWTAANIIDDQIARVREQVGDDEVILGLSGGVDSSVVAALLHKAIGDKLTCVFVDTGLLRWQEGDQVMAMFAEHMGVKVIRVNAADRYFAKLEGVSDPEAKRKIIGNLFVDIFDEESNKLANAKWLAQGTIYPDVIESAGSKTGKAHVIKSHHNVGGLPEHMKLGLVEPLRELFKDEVRRLGVELGLPRTMVYRHPFPGPGLGVRILGEVKREYAELLAKADAIFIDELRKADLYDKTSQAFAVFLPVKSVGVVGDARAYEWVIALRAVETIDFMTAHWAHLPYDFLGTVSNRIINELRGVSRVVYDISGKPPATIEWE</sequence>
<proteinExistence type="inferred from homology"/>
<accession>Q8P8Q6</accession>
<evidence type="ECO:0000255" key="1">
    <source>
        <dbReference type="HAMAP-Rule" id="MF_00344"/>
    </source>
</evidence>
<protein>
    <recommendedName>
        <fullName evidence="1">GMP synthase [glutamine-hydrolyzing]</fullName>
        <ecNumber evidence="1">6.3.5.2</ecNumber>
    </recommendedName>
    <alternativeName>
        <fullName evidence="1">GMP synthetase</fullName>
    </alternativeName>
    <alternativeName>
        <fullName evidence="1">Glutamine amidotransferase</fullName>
    </alternativeName>
</protein>
<reference key="1">
    <citation type="journal article" date="2002" name="Nature">
        <title>Comparison of the genomes of two Xanthomonas pathogens with differing host specificities.</title>
        <authorList>
            <person name="da Silva A.C.R."/>
            <person name="Ferro J.A."/>
            <person name="Reinach F.C."/>
            <person name="Farah C.S."/>
            <person name="Furlan L.R."/>
            <person name="Quaggio R.B."/>
            <person name="Monteiro-Vitorello C.B."/>
            <person name="Van Sluys M.A."/>
            <person name="Almeida N.F. Jr."/>
            <person name="Alves L.M.C."/>
            <person name="do Amaral A.M."/>
            <person name="Bertolini M.C."/>
            <person name="Camargo L.E.A."/>
            <person name="Camarotte G."/>
            <person name="Cannavan F."/>
            <person name="Cardozo J."/>
            <person name="Chambergo F."/>
            <person name="Ciapina L.P."/>
            <person name="Cicarelli R.M.B."/>
            <person name="Coutinho L.L."/>
            <person name="Cursino-Santos J.R."/>
            <person name="El-Dorry H."/>
            <person name="Faria J.B."/>
            <person name="Ferreira A.J.S."/>
            <person name="Ferreira R.C.C."/>
            <person name="Ferro M.I.T."/>
            <person name="Formighieri E.F."/>
            <person name="Franco M.C."/>
            <person name="Greggio C.C."/>
            <person name="Gruber A."/>
            <person name="Katsuyama A.M."/>
            <person name="Kishi L.T."/>
            <person name="Leite R.P."/>
            <person name="Lemos E.G.M."/>
            <person name="Lemos M.V.F."/>
            <person name="Locali E.C."/>
            <person name="Machado M.A."/>
            <person name="Madeira A.M.B.N."/>
            <person name="Martinez-Rossi N.M."/>
            <person name="Martins E.C."/>
            <person name="Meidanis J."/>
            <person name="Menck C.F.M."/>
            <person name="Miyaki C.Y."/>
            <person name="Moon D.H."/>
            <person name="Moreira L.M."/>
            <person name="Novo M.T.M."/>
            <person name="Okura V.K."/>
            <person name="Oliveira M.C."/>
            <person name="Oliveira V.R."/>
            <person name="Pereira H.A."/>
            <person name="Rossi A."/>
            <person name="Sena J.A.D."/>
            <person name="Silva C."/>
            <person name="de Souza R.F."/>
            <person name="Spinola L.A.F."/>
            <person name="Takita M.A."/>
            <person name="Tamura R.E."/>
            <person name="Teixeira E.C."/>
            <person name="Tezza R.I.D."/>
            <person name="Trindade dos Santos M."/>
            <person name="Truffi D."/>
            <person name="Tsai S.M."/>
            <person name="White F.F."/>
            <person name="Setubal J.C."/>
            <person name="Kitajima J.P."/>
        </authorList>
    </citation>
    <scope>NUCLEOTIDE SEQUENCE [LARGE SCALE GENOMIC DNA]</scope>
    <source>
        <strain>ATCC 33913 / DSM 3586 / NCPPB 528 / LMG 568 / P 25</strain>
    </source>
</reference>
<name>GUAA_XANCP</name>